<organism>
    <name type="scientific">Ehrlichia chaffeensis (strain ATCC CRL-10679 / Arkansas)</name>
    <dbReference type="NCBI Taxonomy" id="205920"/>
    <lineage>
        <taxon>Bacteria</taxon>
        <taxon>Pseudomonadati</taxon>
        <taxon>Pseudomonadota</taxon>
        <taxon>Alphaproteobacteria</taxon>
        <taxon>Rickettsiales</taxon>
        <taxon>Anaplasmataceae</taxon>
        <taxon>Ehrlichia</taxon>
    </lineage>
</organism>
<reference key="1">
    <citation type="journal article" date="2006" name="PLoS Genet.">
        <title>Comparative genomics of emerging human ehrlichiosis agents.</title>
        <authorList>
            <person name="Dunning Hotopp J.C."/>
            <person name="Lin M."/>
            <person name="Madupu R."/>
            <person name="Crabtree J."/>
            <person name="Angiuoli S.V."/>
            <person name="Eisen J.A."/>
            <person name="Seshadri R."/>
            <person name="Ren Q."/>
            <person name="Wu M."/>
            <person name="Utterback T.R."/>
            <person name="Smith S."/>
            <person name="Lewis M."/>
            <person name="Khouri H."/>
            <person name="Zhang C."/>
            <person name="Niu H."/>
            <person name="Lin Q."/>
            <person name="Ohashi N."/>
            <person name="Zhi N."/>
            <person name="Nelson W.C."/>
            <person name="Brinkac L.M."/>
            <person name="Dodson R.J."/>
            <person name="Rosovitz M.J."/>
            <person name="Sundaram J.P."/>
            <person name="Daugherty S.C."/>
            <person name="Davidsen T."/>
            <person name="Durkin A.S."/>
            <person name="Gwinn M.L."/>
            <person name="Haft D.H."/>
            <person name="Selengut J.D."/>
            <person name="Sullivan S.A."/>
            <person name="Zafar N."/>
            <person name="Zhou L."/>
            <person name="Benahmed F."/>
            <person name="Forberger H."/>
            <person name="Halpin R."/>
            <person name="Mulligan S."/>
            <person name="Robinson J."/>
            <person name="White O."/>
            <person name="Rikihisa Y."/>
            <person name="Tettelin H."/>
        </authorList>
    </citation>
    <scope>NUCLEOTIDE SEQUENCE [LARGE SCALE GENOMIC DNA]</scope>
    <source>
        <strain>ATCC CRL-10679 / Arkansas</strain>
    </source>
</reference>
<feature type="chain" id="PRO_0000243804" description="Small ribosomal subunit protein bS16">
    <location>
        <begin position="1"/>
        <end position="87"/>
    </location>
</feature>
<sequence>MSVKIRLARFGAKKRPFYRVVVADSRVARDGKFIESLGFYNPMLPKEHELFVKVKVDRLKYWLSVGAQATDRISWFIKKGIINIETA</sequence>
<accession>Q2GHR7</accession>
<keyword id="KW-1185">Reference proteome</keyword>
<keyword id="KW-0687">Ribonucleoprotein</keyword>
<keyword id="KW-0689">Ribosomal protein</keyword>
<proteinExistence type="inferred from homology"/>
<dbReference type="EMBL" id="CP000236">
    <property type="protein sequence ID" value="ABD45435.1"/>
    <property type="molecule type" value="Genomic_DNA"/>
</dbReference>
<dbReference type="RefSeq" id="WP_006010456.1">
    <property type="nucleotide sequence ID" value="NC_007799.1"/>
</dbReference>
<dbReference type="SMR" id="Q2GHR7"/>
<dbReference type="STRING" id="205920.ECH_0192"/>
<dbReference type="KEGG" id="ech:ECH_0192"/>
<dbReference type="eggNOG" id="COG0228">
    <property type="taxonomic scope" value="Bacteria"/>
</dbReference>
<dbReference type="HOGENOM" id="CLU_100590_5_0_5"/>
<dbReference type="OrthoDB" id="9807878at2"/>
<dbReference type="Proteomes" id="UP000008320">
    <property type="component" value="Chromosome"/>
</dbReference>
<dbReference type="GO" id="GO:0005737">
    <property type="term" value="C:cytoplasm"/>
    <property type="evidence" value="ECO:0007669"/>
    <property type="project" value="UniProtKB-ARBA"/>
</dbReference>
<dbReference type="GO" id="GO:0015935">
    <property type="term" value="C:small ribosomal subunit"/>
    <property type="evidence" value="ECO:0007669"/>
    <property type="project" value="TreeGrafter"/>
</dbReference>
<dbReference type="GO" id="GO:0003735">
    <property type="term" value="F:structural constituent of ribosome"/>
    <property type="evidence" value="ECO:0007669"/>
    <property type="project" value="InterPro"/>
</dbReference>
<dbReference type="GO" id="GO:0006412">
    <property type="term" value="P:translation"/>
    <property type="evidence" value="ECO:0007669"/>
    <property type="project" value="UniProtKB-UniRule"/>
</dbReference>
<dbReference type="Gene3D" id="3.30.1320.10">
    <property type="match status" value="1"/>
</dbReference>
<dbReference type="HAMAP" id="MF_00385">
    <property type="entry name" value="Ribosomal_bS16"/>
    <property type="match status" value="1"/>
</dbReference>
<dbReference type="InterPro" id="IPR000307">
    <property type="entry name" value="Ribosomal_bS16"/>
</dbReference>
<dbReference type="InterPro" id="IPR020592">
    <property type="entry name" value="Ribosomal_bS16_CS"/>
</dbReference>
<dbReference type="InterPro" id="IPR023803">
    <property type="entry name" value="Ribosomal_bS16_dom_sf"/>
</dbReference>
<dbReference type="NCBIfam" id="TIGR00002">
    <property type="entry name" value="S16"/>
    <property type="match status" value="1"/>
</dbReference>
<dbReference type="PANTHER" id="PTHR12919">
    <property type="entry name" value="30S RIBOSOMAL PROTEIN S16"/>
    <property type="match status" value="1"/>
</dbReference>
<dbReference type="PANTHER" id="PTHR12919:SF20">
    <property type="entry name" value="SMALL RIBOSOMAL SUBUNIT PROTEIN BS16M"/>
    <property type="match status" value="1"/>
</dbReference>
<dbReference type="Pfam" id="PF00886">
    <property type="entry name" value="Ribosomal_S16"/>
    <property type="match status" value="1"/>
</dbReference>
<dbReference type="SUPFAM" id="SSF54565">
    <property type="entry name" value="Ribosomal protein S16"/>
    <property type="match status" value="1"/>
</dbReference>
<dbReference type="PROSITE" id="PS00732">
    <property type="entry name" value="RIBOSOMAL_S16"/>
    <property type="match status" value="1"/>
</dbReference>
<comment type="similarity">
    <text evidence="1">Belongs to the bacterial ribosomal protein bS16 family.</text>
</comment>
<evidence type="ECO:0000255" key="1">
    <source>
        <dbReference type="HAMAP-Rule" id="MF_00385"/>
    </source>
</evidence>
<evidence type="ECO:0000305" key="2"/>
<gene>
    <name evidence="1" type="primary">rpsP</name>
    <name type="ordered locus">ECH_0192</name>
</gene>
<name>RS16_EHRCR</name>
<protein>
    <recommendedName>
        <fullName evidence="1">Small ribosomal subunit protein bS16</fullName>
    </recommendedName>
    <alternativeName>
        <fullName evidence="2">30S ribosomal protein S16</fullName>
    </alternativeName>
</protein>